<gene>
    <name type="ordered locus">ECU06_0670</name>
</gene>
<sequence>MEGKDTKKKKKNIIIINDKGEMRSVAKKTLDSSESSLAQSKEVGEVDEVKGMETDAEKKDEPAMESKGCCKKCSNGDARGCHSERSGNYSEQPEKQEAADGEDSSKKESPREEQTPLLDKEEADEKTEENAKPSSEKKNDAFIPPILGTSMTVANKEIFEDRENGNTVVEGWMWKKRRIFSCFWHRKYFVLTREGILKYYKADGRRHPKGNWNMKDSTEIRHYNLPSEENSHPFRVLVFFPDFSFLLAFDDKNSKDYWVEKLNETIRRLKK</sequence>
<protein>
    <recommendedName>
        <fullName>PH domain-containing protein ECU06_0670</fullName>
    </recommendedName>
</protein>
<reference key="1">
    <citation type="journal article" date="2001" name="Nature">
        <title>Genome sequence and gene compaction of the eukaryote parasite Encephalitozoon cuniculi.</title>
        <authorList>
            <person name="Katinka M.D."/>
            <person name="Duprat S."/>
            <person name="Cornillot E."/>
            <person name="Metenier G."/>
            <person name="Thomarat F."/>
            <person name="Prensier G."/>
            <person name="Barbe V."/>
            <person name="Peyretaillade E."/>
            <person name="Brottier P."/>
            <person name="Wincker P."/>
            <person name="Delbac F."/>
            <person name="El Alaoui H."/>
            <person name="Peyret P."/>
            <person name="Saurin W."/>
            <person name="Gouy M."/>
            <person name="Weissenbach J."/>
            <person name="Vivares C.P."/>
        </authorList>
    </citation>
    <scope>NUCLEOTIDE SEQUENCE [LARGE SCALE GENOMIC DNA]</scope>
    <source>
        <strain>GB-M1</strain>
    </source>
</reference>
<reference key="2">
    <citation type="journal article" date="2006" name="Proteomics">
        <title>Proteomic analysis of the eukaryotic parasite Encephalitozoon cuniculi (microsporidia): a reference map for proteins expressed in late sporogonial stages.</title>
        <authorList>
            <person name="Brosson D."/>
            <person name="Kuhn L."/>
            <person name="Delbac F."/>
            <person name="Garin J."/>
            <person name="Vivares C.P."/>
            <person name="Texier C."/>
        </authorList>
    </citation>
    <scope>IDENTIFICATION BY MASS SPECTROMETRY [LARGE SCALE ANALYSIS]</scope>
    <scope>DEVELOPMENTAL STAGE</scope>
    <scope>SUBCELLULAR LOCATION</scope>
</reference>
<accession>Q8SVC0</accession>
<feature type="chain" id="PRO_0000383033" description="PH domain-containing protein ECU06_0670">
    <location>
        <begin position="1"/>
        <end position="271"/>
    </location>
</feature>
<feature type="domain" description="PH" evidence="1">
    <location>
        <begin position="166"/>
        <end position="267"/>
    </location>
</feature>
<feature type="region of interest" description="Disordered" evidence="2">
    <location>
        <begin position="26"/>
        <end position="145"/>
    </location>
</feature>
<feature type="compositionally biased region" description="Basic and acidic residues" evidence="2">
    <location>
        <begin position="42"/>
        <end position="64"/>
    </location>
</feature>
<feature type="compositionally biased region" description="Basic and acidic residues" evidence="2">
    <location>
        <begin position="92"/>
        <end position="120"/>
    </location>
</feature>
<feature type="compositionally biased region" description="Basic and acidic residues" evidence="2">
    <location>
        <begin position="128"/>
        <end position="140"/>
    </location>
</feature>
<comment type="developmental stage">
    <text evidence="3">Expressed in late sporogonial stages.</text>
</comment>
<keyword id="KW-1185">Reference proteome</keyword>
<evidence type="ECO:0000255" key="1">
    <source>
        <dbReference type="PROSITE-ProRule" id="PRU00145"/>
    </source>
</evidence>
<evidence type="ECO:0000256" key="2">
    <source>
        <dbReference type="SAM" id="MobiDB-lite"/>
    </source>
</evidence>
<evidence type="ECO:0000269" key="3">
    <source>
    </source>
</evidence>
<dbReference type="EMBL" id="AL590446">
    <property type="protein sequence ID" value="CAD25427.1"/>
    <property type="molecule type" value="Genomic_DNA"/>
</dbReference>
<dbReference type="RefSeq" id="NP_585823.1">
    <property type="nucleotide sequence ID" value="NM_001041445.1"/>
</dbReference>
<dbReference type="STRING" id="284813.Q8SVC0"/>
<dbReference type="GeneID" id="859247"/>
<dbReference type="KEGG" id="ecu:ECU06_0670"/>
<dbReference type="VEuPathDB" id="MicrosporidiaDB:ECU06_0670"/>
<dbReference type="HOGENOM" id="CLU_1034492_0_0_1"/>
<dbReference type="InParanoid" id="Q8SVC0"/>
<dbReference type="OMA" id="DEPAMES"/>
<dbReference type="OrthoDB" id="73919at2759"/>
<dbReference type="Proteomes" id="UP000000819">
    <property type="component" value="Chromosome VI"/>
</dbReference>
<dbReference type="CDD" id="cd00821">
    <property type="entry name" value="PH"/>
    <property type="match status" value="1"/>
</dbReference>
<dbReference type="Gene3D" id="2.30.29.30">
    <property type="entry name" value="Pleckstrin-homology domain (PH domain)/Phosphotyrosine-binding domain (PTB)"/>
    <property type="match status" value="1"/>
</dbReference>
<dbReference type="InterPro" id="IPR011993">
    <property type="entry name" value="PH-like_dom_sf"/>
</dbReference>
<dbReference type="InterPro" id="IPR001849">
    <property type="entry name" value="PH_domain"/>
</dbReference>
<dbReference type="Pfam" id="PF00169">
    <property type="entry name" value="PH"/>
    <property type="match status" value="1"/>
</dbReference>
<dbReference type="SMART" id="SM00233">
    <property type="entry name" value="PH"/>
    <property type="match status" value="1"/>
</dbReference>
<dbReference type="SUPFAM" id="SSF50729">
    <property type="entry name" value="PH domain-like"/>
    <property type="match status" value="1"/>
</dbReference>
<dbReference type="PROSITE" id="PS50003">
    <property type="entry name" value="PH_DOMAIN"/>
    <property type="match status" value="1"/>
</dbReference>
<proteinExistence type="evidence at protein level"/>
<organism>
    <name type="scientific">Encephalitozoon cuniculi (strain GB-M1)</name>
    <name type="common">Microsporidian parasite</name>
    <dbReference type="NCBI Taxonomy" id="284813"/>
    <lineage>
        <taxon>Eukaryota</taxon>
        <taxon>Fungi</taxon>
        <taxon>Fungi incertae sedis</taxon>
        <taxon>Microsporidia</taxon>
        <taxon>Unikaryonidae</taxon>
        <taxon>Encephalitozoon</taxon>
    </lineage>
</organism>
<name>Y667_ENCCU</name>